<dbReference type="EC" id="4.1.99.22" evidence="1"/>
<dbReference type="EMBL" id="AE005674">
    <property type="protein sequence ID" value="AAN42366.2"/>
    <property type="molecule type" value="Genomic_DNA"/>
</dbReference>
<dbReference type="EMBL" id="AE014073">
    <property type="protein sequence ID" value="AAP16243.1"/>
    <property type="molecule type" value="Genomic_DNA"/>
</dbReference>
<dbReference type="RefSeq" id="NP_706659.2">
    <property type="nucleotide sequence ID" value="NC_004337.2"/>
</dbReference>
<dbReference type="RefSeq" id="WP_005048531.1">
    <property type="nucleotide sequence ID" value="NZ_WPGW01000030.1"/>
</dbReference>
<dbReference type="SMR" id="Q83S40"/>
<dbReference type="STRING" id="198214.SF0731"/>
<dbReference type="PaxDb" id="198214-SF0731"/>
<dbReference type="GeneID" id="1023722"/>
<dbReference type="KEGG" id="sfl:SF0731"/>
<dbReference type="KEGG" id="sfx:S0772"/>
<dbReference type="PATRIC" id="fig|198214.7.peg.851"/>
<dbReference type="HOGENOM" id="CLU_009273_0_1_6"/>
<dbReference type="UniPathway" id="UPA00344"/>
<dbReference type="Proteomes" id="UP000001006">
    <property type="component" value="Chromosome"/>
</dbReference>
<dbReference type="Proteomes" id="UP000002673">
    <property type="component" value="Chromosome"/>
</dbReference>
<dbReference type="GO" id="GO:0051539">
    <property type="term" value="F:4 iron, 4 sulfur cluster binding"/>
    <property type="evidence" value="ECO:0007669"/>
    <property type="project" value="UniProtKB-UniRule"/>
</dbReference>
<dbReference type="GO" id="GO:0061799">
    <property type="term" value="F:cyclic pyranopterin monophosphate synthase activity"/>
    <property type="evidence" value="ECO:0007669"/>
    <property type="project" value="TreeGrafter"/>
</dbReference>
<dbReference type="GO" id="GO:0061798">
    <property type="term" value="F:GTP 3',8'-cyclase activity"/>
    <property type="evidence" value="ECO:0007669"/>
    <property type="project" value="UniProtKB-UniRule"/>
</dbReference>
<dbReference type="GO" id="GO:0005525">
    <property type="term" value="F:GTP binding"/>
    <property type="evidence" value="ECO:0007669"/>
    <property type="project" value="UniProtKB-UniRule"/>
</dbReference>
<dbReference type="GO" id="GO:0046872">
    <property type="term" value="F:metal ion binding"/>
    <property type="evidence" value="ECO:0007669"/>
    <property type="project" value="UniProtKB-KW"/>
</dbReference>
<dbReference type="GO" id="GO:1904047">
    <property type="term" value="F:S-adenosyl-L-methionine binding"/>
    <property type="evidence" value="ECO:0007669"/>
    <property type="project" value="UniProtKB-UniRule"/>
</dbReference>
<dbReference type="GO" id="GO:0006777">
    <property type="term" value="P:Mo-molybdopterin cofactor biosynthetic process"/>
    <property type="evidence" value="ECO:0007669"/>
    <property type="project" value="UniProtKB-UniRule"/>
</dbReference>
<dbReference type="CDD" id="cd01335">
    <property type="entry name" value="Radical_SAM"/>
    <property type="match status" value="1"/>
</dbReference>
<dbReference type="CDD" id="cd21117">
    <property type="entry name" value="Twitch_MoaA"/>
    <property type="match status" value="1"/>
</dbReference>
<dbReference type="FunFam" id="3.20.20.70:FF:000057">
    <property type="entry name" value="GTP 3',8-cyclase"/>
    <property type="match status" value="1"/>
</dbReference>
<dbReference type="Gene3D" id="3.20.20.70">
    <property type="entry name" value="Aldolase class I"/>
    <property type="match status" value="1"/>
</dbReference>
<dbReference type="HAMAP" id="MF_01225_B">
    <property type="entry name" value="MoaA_B"/>
    <property type="match status" value="1"/>
</dbReference>
<dbReference type="InterPro" id="IPR013785">
    <property type="entry name" value="Aldolase_TIM"/>
</dbReference>
<dbReference type="InterPro" id="IPR006638">
    <property type="entry name" value="Elp3/MiaA/NifB-like_rSAM"/>
</dbReference>
<dbReference type="InterPro" id="IPR013483">
    <property type="entry name" value="MoaA"/>
</dbReference>
<dbReference type="InterPro" id="IPR000385">
    <property type="entry name" value="MoaA_NifB_PqqE_Fe-S-bd_CS"/>
</dbReference>
<dbReference type="InterPro" id="IPR010505">
    <property type="entry name" value="MoaA_twitch"/>
</dbReference>
<dbReference type="InterPro" id="IPR050105">
    <property type="entry name" value="MoCo_biosynth_MoaA/MoaC"/>
</dbReference>
<dbReference type="InterPro" id="IPR007197">
    <property type="entry name" value="rSAM"/>
</dbReference>
<dbReference type="NCBIfam" id="TIGR02666">
    <property type="entry name" value="moaA"/>
    <property type="match status" value="1"/>
</dbReference>
<dbReference type="PANTHER" id="PTHR22960:SF28">
    <property type="entry name" value="GTP 3',8-CYCLASE"/>
    <property type="match status" value="1"/>
</dbReference>
<dbReference type="PANTHER" id="PTHR22960">
    <property type="entry name" value="MOLYBDOPTERIN COFACTOR SYNTHESIS PROTEIN A"/>
    <property type="match status" value="1"/>
</dbReference>
<dbReference type="Pfam" id="PF13353">
    <property type="entry name" value="Fer4_12"/>
    <property type="match status" value="1"/>
</dbReference>
<dbReference type="Pfam" id="PF06463">
    <property type="entry name" value="Mob_synth_C"/>
    <property type="match status" value="1"/>
</dbReference>
<dbReference type="Pfam" id="PF04055">
    <property type="entry name" value="Radical_SAM"/>
    <property type="match status" value="1"/>
</dbReference>
<dbReference type="SFLD" id="SFLDG01383">
    <property type="entry name" value="cyclic_pyranopterin_phosphate"/>
    <property type="match status" value="1"/>
</dbReference>
<dbReference type="SFLD" id="SFLDS00029">
    <property type="entry name" value="Radical_SAM"/>
    <property type="match status" value="1"/>
</dbReference>
<dbReference type="SMART" id="SM00729">
    <property type="entry name" value="Elp3"/>
    <property type="match status" value="1"/>
</dbReference>
<dbReference type="SUPFAM" id="SSF102114">
    <property type="entry name" value="Radical SAM enzymes"/>
    <property type="match status" value="1"/>
</dbReference>
<dbReference type="PROSITE" id="PS01305">
    <property type="entry name" value="MOAA_NIFB_PQQE"/>
    <property type="match status" value="1"/>
</dbReference>
<dbReference type="PROSITE" id="PS51918">
    <property type="entry name" value="RADICAL_SAM"/>
    <property type="match status" value="1"/>
</dbReference>
<comment type="function">
    <text evidence="1">Catalyzes the cyclization of GTP to (8S)-3',8-cyclo-7,8-dihydroguanosine 5'-triphosphate.</text>
</comment>
<comment type="catalytic activity">
    <reaction evidence="1">
        <text>GTP + AH2 + S-adenosyl-L-methionine = (8S)-3',8-cyclo-7,8-dihydroguanosine 5'-triphosphate + 5'-deoxyadenosine + L-methionine + A + H(+)</text>
        <dbReference type="Rhea" id="RHEA:49576"/>
        <dbReference type="ChEBI" id="CHEBI:13193"/>
        <dbReference type="ChEBI" id="CHEBI:15378"/>
        <dbReference type="ChEBI" id="CHEBI:17319"/>
        <dbReference type="ChEBI" id="CHEBI:17499"/>
        <dbReference type="ChEBI" id="CHEBI:37565"/>
        <dbReference type="ChEBI" id="CHEBI:57844"/>
        <dbReference type="ChEBI" id="CHEBI:59789"/>
        <dbReference type="ChEBI" id="CHEBI:131766"/>
        <dbReference type="EC" id="4.1.99.22"/>
    </reaction>
</comment>
<comment type="cofactor">
    <cofactor evidence="1">
        <name>[4Fe-4S] cluster</name>
        <dbReference type="ChEBI" id="CHEBI:49883"/>
    </cofactor>
    <text evidence="1">Binds 2 [4Fe-4S] clusters. Binds 1 [4Fe-4S] cluster coordinated with 3 cysteines and an exchangeable S-adenosyl-L-methionine and 1 [4Fe-4S] cluster coordinated with 3 cysteines and the GTP-derived substrate.</text>
</comment>
<comment type="pathway">
    <text evidence="1">Cofactor biosynthesis; molybdopterin biosynthesis.</text>
</comment>
<comment type="subunit">
    <text evidence="1">Monomer and homodimer.</text>
</comment>
<comment type="similarity">
    <text evidence="1">Belongs to the radical SAM superfamily. MoaA family.</text>
</comment>
<keyword id="KW-0004">4Fe-4S</keyword>
<keyword id="KW-0342">GTP-binding</keyword>
<keyword id="KW-0408">Iron</keyword>
<keyword id="KW-0411">Iron-sulfur</keyword>
<keyword id="KW-0456">Lyase</keyword>
<keyword id="KW-0479">Metal-binding</keyword>
<keyword id="KW-0501">Molybdenum cofactor biosynthesis</keyword>
<keyword id="KW-0547">Nucleotide-binding</keyword>
<keyword id="KW-1185">Reference proteome</keyword>
<keyword id="KW-0949">S-adenosyl-L-methionine</keyword>
<name>MOAA_SHIFL</name>
<evidence type="ECO:0000255" key="1">
    <source>
        <dbReference type="HAMAP-Rule" id="MF_01225"/>
    </source>
</evidence>
<evidence type="ECO:0000255" key="2">
    <source>
        <dbReference type="PROSITE-ProRule" id="PRU01266"/>
    </source>
</evidence>
<sequence length="329" mass="37274">MASQLTDVFARKFYYLRLSITDVCNFRCTYCLPDGYKPSGVTNKGFLTVDEIRRVTRAFASLGTEKVRLTGGEPSLRRDFTDIIAAVRENDAIRQIAVTTNGYRLERDVANWRDAGLTGINVSVDSLDARQFHAITGQDKFNQVMAGIDAAFEAGFEKVKVNTVLMRDVNHHQLDTFLNWIQHRPIQLRFIELMETGEGSELFRKHHISGQVLRDELLRRGWIHQLRQRSDGPAQVFCHPDYAGEIGLIMPYEKDFCATCNRLRVSSIGKLHLCLFGEGGVNLRDLLEGDTQQQALEARISAALREKKQTHFLHQNNTGITQNLSYIGG</sequence>
<proteinExistence type="inferred from homology"/>
<organism>
    <name type="scientific">Shigella flexneri</name>
    <dbReference type="NCBI Taxonomy" id="623"/>
    <lineage>
        <taxon>Bacteria</taxon>
        <taxon>Pseudomonadati</taxon>
        <taxon>Pseudomonadota</taxon>
        <taxon>Gammaproteobacteria</taxon>
        <taxon>Enterobacterales</taxon>
        <taxon>Enterobacteriaceae</taxon>
        <taxon>Shigella</taxon>
    </lineage>
</organism>
<protein>
    <recommendedName>
        <fullName evidence="1">GTP 3',8-cyclase</fullName>
        <ecNumber evidence="1">4.1.99.22</ecNumber>
    </recommendedName>
    <alternativeName>
        <fullName evidence="1">Molybdenum cofactor biosynthesis protein A</fullName>
    </alternativeName>
</protein>
<accession>Q83S40</accession>
<accession>Q7UD93</accession>
<reference key="1">
    <citation type="journal article" date="2002" name="Nucleic Acids Res.">
        <title>Genome sequence of Shigella flexneri 2a: insights into pathogenicity through comparison with genomes of Escherichia coli K12 and O157.</title>
        <authorList>
            <person name="Jin Q."/>
            <person name="Yuan Z."/>
            <person name="Xu J."/>
            <person name="Wang Y."/>
            <person name="Shen Y."/>
            <person name="Lu W."/>
            <person name="Wang J."/>
            <person name="Liu H."/>
            <person name="Yang J."/>
            <person name="Yang F."/>
            <person name="Zhang X."/>
            <person name="Zhang J."/>
            <person name="Yang G."/>
            <person name="Wu H."/>
            <person name="Qu D."/>
            <person name="Dong J."/>
            <person name="Sun L."/>
            <person name="Xue Y."/>
            <person name="Zhao A."/>
            <person name="Gao Y."/>
            <person name="Zhu J."/>
            <person name="Kan B."/>
            <person name="Ding K."/>
            <person name="Chen S."/>
            <person name="Cheng H."/>
            <person name="Yao Z."/>
            <person name="He B."/>
            <person name="Chen R."/>
            <person name="Ma D."/>
            <person name="Qiang B."/>
            <person name="Wen Y."/>
            <person name="Hou Y."/>
            <person name="Yu J."/>
        </authorList>
    </citation>
    <scope>NUCLEOTIDE SEQUENCE [LARGE SCALE GENOMIC DNA]</scope>
    <source>
        <strain>301 / Serotype 2a</strain>
    </source>
</reference>
<reference key="2">
    <citation type="journal article" date="2003" name="Infect. Immun.">
        <title>Complete genome sequence and comparative genomics of Shigella flexneri serotype 2a strain 2457T.</title>
        <authorList>
            <person name="Wei J."/>
            <person name="Goldberg M.B."/>
            <person name="Burland V."/>
            <person name="Venkatesan M.M."/>
            <person name="Deng W."/>
            <person name="Fournier G."/>
            <person name="Mayhew G.F."/>
            <person name="Plunkett G. III"/>
            <person name="Rose D.J."/>
            <person name="Darling A."/>
            <person name="Mau B."/>
            <person name="Perna N.T."/>
            <person name="Payne S.M."/>
            <person name="Runyen-Janecky L.J."/>
            <person name="Zhou S."/>
            <person name="Schwartz D.C."/>
            <person name="Blattner F.R."/>
        </authorList>
    </citation>
    <scope>NUCLEOTIDE SEQUENCE [LARGE SCALE GENOMIC DNA]</scope>
    <source>
        <strain>ATCC 700930 / 2457T / Serotype 2a</strain>
    </source>
</reference>
<feature type="chain" id="PRO_1000054225" description="GTP 3',8-cyclase">
    <location>
        <begin position="1"/>
        <end position="329"/>
    </location>
</feature>
<feature type="domain" description="Radical SAM core" evidence="2">
    <location>
        <begin position="8"/>
        <end position="234"/>
    </location>
</feature>
<feature type="binding site" evidence="1">
    <location>
        <position position="17"/>
    </location>
    <ligand>
        <name>GTP</name>
        <dbReference type="ChEBI" id="CHEBI:37565"/>
    </ligand>
</feature>
<feature type="binding site" evidence="1">
    <location>
        <position position="24"/>
    </location>
    <ligand>
        <name>[4Fe-4S] cluster</name>
        <dbReference type="ChEBI" id="CHEBI:49883"/>
        <label>1</label>
        <note>4Fe-4S-S-AdoMet</note>
    </ligand>
</feature>
<feature type="binding site" evidence="1">
    <location>
        <position position="28"/>
    </location>
    <ligand>
        <name>[4Fe-4S] cluster</name>
        <dbReference type="ChEBI" id="CHEBI:49883"/>
        <label>1</label>
        <note>4Fe-4S-S-AdoMet</note>
    </ligand>
</feature>
<feature type="binding site" evidence="1">
    <location>
        <position position="30"/>
    </location>
    <ligand>
        <name>S-adenosyl-L-methionine</name>
        <dbReference type="ChEBI" id="CHEBI:59789"/>
    </ligand>
</feature>
<feature type="binding site" evidence="1">
    <location>
        <position position="31"/>
    </location>
    <ligand>
        <name>[4Fe-4S] cluster</name>
        <dbReference type="ChEBI" id="CHEBI:49883"/>
        <label>1</label>
        <note>4Fe-4S-S-AdoMet</note>
    </ligand>
</feature>
<feature type="binding site" evidence="1">
    <location>
        <position position="68"/>
    </location>
    <ligand>
        <name>GTP</name>
        <dbReference type="ChEBI" id="CHEBI:37565"/>
    </ligand>
</feature>
<feature type="binding site" evidence="1">
    <location>
        <position position="72"/>
    </location>
    <ligand>
        <name>S-adenosyl-L-methionine</name>
        <dbReference type="ChEBI" id="CHEBI:59789"/>
    </ligand>
</feature>
<feature type="binding site" evidence="1">
    <location>
        <position position="99"/>
    </location>
    <ligand>
        <name>GTP</name>
        <dbReference type="ChEBI" id="CHEBI:37565"/>
    </ligand>
</feature>
<feature type="binding site" evidence="1">
    <location>
        <position position="123"/>
    </location>
    <ligand>
        <name>S-adenosyl-L-methionine</name>
        <dbReference type="ChEBI" id="CHEBI:59789"/>
    </ligand>
</feature>
<feature type="binding site" evidence="1">
    <location>
        <position position="160"/>
    </location>
    <ligand>
        <name>GTP</name>
        <dbReference type="ChEBI" id="CHEBI:37565"/>
    </ligand>
</feature>
<feature type="binding site" evidence="1">
    <location>
        <position position="194"/>
    </location>
    <ligand>
        <name>S-adenosyl-L-methionine</name>
        <dbReference type="ChEBI" id="CHEBI:59789"/>
    </ligand>
</feature>
<feature type="binding site" evidence="1">
    <location>
        <position position="257"/>
    </location>
    <ligand>
        <name>[4Fe-4S] cluster</name>
        <dbReference type="ChEBI" id="CHEBI:49883"/>
        <label>2</label>
        <note>4Fe-4S-substrate</note>
    </ligand>
</feature>
<feature type="binding site" evidence="1">
    <location>
        <position position="260"/>
    </location>
    <ligand>
        <name>[4Fe-4S] cluster</name>
        <dbReference type="ChEBI" id="CHEBI:49883"/>
        <label>2</label>
        <note>4Fe-4S-substrate</note>
    </ligand>
</feature>
<feature type="binding site" evidence="1">
    <location>
        <begin position="262"/>
        <end position="264"/>
    </location>
    <ligand>
        <name>GTP</name>
        <dbReference type="ChEBI" id="CHEBI:37565"/>
    </ligand>
</feature>
<feature type="binding site" evidence="1">
    <location>
        <position position="274"/>
    </location>
    <ligand>
        <name>[4Fe-4S] cluster</name>
        <dbReference type="ChEBI" id="CHEBI:49883"/>
        <label>2</label>
        <note>4Fe-4S-substrate</note>
    </ligand>
</feature>
<gene>
    <name evidence="1" type="primary">moaA</name>
    <name type="ordered locus">SF0731</name>
    <name type="ordered locus">S0772</name>
</gene>